<organism>
    <name type="scientific">Yersinia enterocolitica serotype O:8 / biotype 1B (strain NCTC 13174 / 8081)</name>
    <dbReference type="NCBI Taxonomy" id="393305"/>
    <lineage>
        <taxon>Bacteria</taxon>
        <taxon>Pseudomonadati</taxon>
        <taxon>Pseudomonadota</taxon>
        <taxon>Gammaproteobacteria</taxon>
        <taxon>Enterobacterales</taxon>
        <taxon>Yersiniaceae</taxon>
        <taxon>Yersinia</taxon>
    </lineage>
</organism>
<protein>
    <recommendedName>
        <fullName evidence="1">Probable cytosol aminopeptidase</fullName>
        <ecNumber evidence="1">3.4.11.1</ecNumber>
    </recommendedName>
    <alternativeName>
        <fullName evidence="1">Leucine aminopeptidase</fullName>
        <shortName evidence="1">LAP</shortName>
        <ecNumber evidence="1">3.4.11.10</ecNumber>
    </alternativeName>
    <alternativeName>
        <fullName evidence="1">Leucyl aminopeptidase</fullName>
    </alternativeName>
</protein>
<name>AMPA_YERE8</name>
<reference key="1">
    <citation type="journal article" date="2006" name="PLoS Genet.">
        <title>The complete genome sequence and comparative genome analysis of the high pathogenicity Yersinia enterocolitica strain 8081.</title>
        <authorList>
            <person name="Thomson N.R."/>
            <person name="Howard S."/>
            <person name="Wren B.W."/>
            <person name="Holden M.T.G."/>
            <person name="Crossman L."/>
            <person name="Challis G.L."/>
            <person name="Churcher C."/>
            <person name="Mungall K."/>
            <person name="Brooks K."/>
            <person name="Chillingworth T."/>
            <person name="Feltwell T."/>
            <person name="Abdellah Z."/>
            <person name="Hauser H."/>
            <person name="Jagels K."/>
            <person name="Maddison M."/>
            <person name="Moule S."/>
            <person name="Sanders M."/>
            <person name="Whitehead S."/>
            <person name="Quail M.A."/>
            <person name="Dougan G."/>
            <person name="Parkhill J."/>
            <person name="Prentice M.B."/>
        </authorList>
    </citation>
    <scope>NUCLEOTIDE SEQUENCE [LARGE SCALE GENOMIC DNA]</scope>
    <source>
        <strain>NCTC 13174 / 8081</strain>
    </source>
</reference>
<feature type="chain" id="PRO_1000020003" description="Probable cytosol aminopeptidase">
    <location>
        <begin position="1"/>
        <end position="503"/>
    </location>
</feature>
<feature type="active site" evidence="1">
    <location>
        <position position="282"/>
    </location>
</feature>
<feature type="active site" evidence="1">
    <location>
        <position position="356"/>
    </location>
</feature>
<feature type="binding site" evidence="1">
    <location>
        <position position="270"/>
    </location>
    <ligand>
        <name>Mn(2+)</name>
        <dbReference type="ChEBI" id="CHEBI:29035"/>
        <label>2</label>
    </ligand>
</feature>
<feature type="binding site" evidence="1">
    <location>
        <position position="275"/>
    </location>
    <ligand>
        <name>Mn(2+)</name>
        <dbReference type="ChEBI" id="CHEBI:29035"/>
        <label>1</label>
    </ligand>
</feature>
<feature type="binding site" evidence="1">
    <location>
        <position position="275"/>
    </location>
    <ligand>
        <name>Mn(2+)</name>
        <dbReference type="ChEBI" id="CHEBI:29035"/>
        <label>2</label>
    </ligand>
</feature>
<feature type="binding site" evidence="1">
    <location>
        <position position="293"/>
    </location>
    <ligand>
        <name>Mn(2+)</name>
        <dbReference type="ChEBI" id="CHEBI:29035"/>
        <label>2</label>
    </ligand>
</feature>
<feature type="binding site" evidence="1">
    <location>
        <position position="352"/>
    </location>
    <ligand>
        <name>Mn(2+)</name>
        <dbReference type="ChEBI" id="CHEBI:29035"/>
        <label>1</label>
    </ligand>
</feature>
<feature type="binding site" evidence="1">
    <location>
        <position position="354"/>
    </location>
    <ligand>
        <name>Mn(2+)</name>
        <dbReference type="ChEBI" id="CHEBI:29035"/>
        <label>1</label>
    </ligand>
</feature>
<feature type="binding site" evidence="1">
    <location>
        <position position="354"/>
    </location>
    <ligand>
        <name>Mn(2+)</name>
        <dbReference type="ChEBI" id="CHEBI:29035"/>
        <label>2</label>
    </ligand>
</feature>
<gene>
    <name evidence="1" type="primary">pepA</name>
    <name type="ordered locus">YE0500</name>
</gene>
<keyword id="KW-0031">Aminopeptidase</keyword>
<keyword id="KW-0963">Cytoplasm</keyword>
<keyword id="KW-0378">Hydrolase</keyword>
<keyword id="KW-0464">Manganese</keyword>
<keyword id="KW-0479">Metal-binding</keyword>
<keyword id="KW-0645">Protease</keyword>
<accession>A1JJ31</accession>
<sequence>MEFSVKSGSPEKQRSACIVVGVFEPRRLSPIAEQLDKISDGYISALLRRGELEGKVGQTLLLHHVPNILSERILLIGCGKERELDERQYKQVIQKTINTLNDTGSMEAVCFLTELHVKGRNTYWKVRQAVETAKETLYTFDQLKSNKTEPRRPLRKMVFNVPTRRELTSGERAIQHGLAVASGIKAAKDLGNMPPNICNAAYLASQARQLADAFSTNIITRVIGEQQMKELGMHSYLAVGHGSQNESLMSVIEYKGNPNPDAKPIVLVGKGLTFDSGGISIKPAEGMDEMKYDMCGAATVYGVMRVVAELQLPLNVIGVLAGCENMPGGRAYRPGDILTTMSGQTVEVLNTDAEGRLVLCDALTYVERFEPEVVIDIATLTGACVVALGHHITGLMSNHNPLAHELIGASEQAGDRAWRLPLGDEFYEQLDSNFADMANIGGRAGGAITAGCFLSRFTRKYSWAHLDIAGTAWRSGKNKGATGRPVALLSQFLLNRAGLNGDD</sequence>
<evidence type="ECO:0000255" key="1">
    <source>
        <dbReference type="HAMAP-Rule" id="MF_00181"/>
    </source>
</evidence>
<dbReference type="EC" id="3.4.11.1" evidence="1"/>
<dbReference type="EC" id="3.4.11.10" evidence="1"/>
<dbReference type="EMBL" id="AM286415">
    <property type="protein sequence ID" value="CAL10620.1"/>
    <property type="molecule type" value="Genomic_DNA"/>
</dbReference>
<dbReference type="RefSeq" id="WP_005175279.1">
    <property type="nucleotide sequence ID" value="NC_008800.1"/>
</dbReference>
<dbReference type="RefSeq" id="YP_001004864.1">
    <property type="nucleotide sequence ID" value="NC_008800.1"/>
</dbReference>
<dbReference type="SMR" id="A1JJ31"/>
<dbReference type="MEROPS" id="M17.003"/>
<dbReference type="GeneID" id="93968969"/>
<dbReference type="KEGG" id="yen:YE0500"/>
<dbReference type="PATRIC" id="fig|393305.7.peg.594"/>
<dbReference type="eggNOG" id="COG0260">
    <property type="taxonomic scope" value="Bacteria"/>
</dbReference>
<dbReference type="HOGENOM" id="CLU_013734_2_2_6"/>
<dbReference type="OrthoDB" id="9809354at2"/>
<dbReference type="Proteomes" id="UP000000642">
    <property type="component" value="Chromosome"/>
</dbReference>
<dbReference type="GO" id="GO:0005737">
    <property type="term" value="C:cytoplasm"/>
    <property type="evidence" value="ECO:0007669"/>
    <property type="project" value="UniProtKB-SubCell"/>
</dbReference>
<dbReference type="GO" id="GO:0030145">
    <property type="term" value="F:manganese ion binding"/>
    <property type="evidence" value="ECO:0007669"/>
    <property type="project" value="UniProtKB-UniRule"/>
</dbReference>
<dbReference type="GO" id="GO:0070006">
    <property type="term" value="F:metalloaminopeptidase activity"/>
    <property type="evidence" value="ECO:0007669"/>
    <property type="project" value="InterPro"/>
</dbReference>
<dbReference type="GO" id="GO:0006508">
    <property type="term" value="P:proteolysis"/>
    <property type="evidence" value="ECO:0007669"/>
    <property type="project" value="UniProtKB-KW"/>
</dbReference>
<dbReference type="CDD" id="cd00433">
    <property type="entry name" value="Peptidase_M17"/>
    <property type="match status" value="1"/>
</dbReference>
<dbReference type="FunFam" id="3.40.220.10:FF:000001">
    <property type="entry name" value="Probable cytosol aminopeptidase"/>
    <property type="match status" value="1"/>
</dbReference>
<dbReference type="FunFam" id="3.40.630.10:FF:000004">
    <property type="entry name" value="Probable cytosol aminopeptidase"/>
    <property type="match status" value="1"/>
</dbReference>
<dbReference type="Gene3D" id="3.40.220.10">
    <property type="entry name" value="Leucine Aminopeptidase, subunit E, domain 1"/>
    <property type="match status" value="1"/>
</dbReference>
<dbReference type="Gene3D" id="3.40.630.10">
    <property type="entry name" value="Zn peptidases"/>
    <property type="match status" value="1"/>
</dbReference>
<dbReference type="HAMAP" id="MF_00181">
    <property type="entry name" value="Cytosol_peptidase_M17"/>
    <property type="match status" value="1"/>
</dbReference>
<dbReference type="InterPro" id="IPR011356">
    <property type="entry name" value="Leucine_aapep/pepB"/>
</dbReference>
<dbReference type="InterPro" id="IPR043472">
    <property type="entry name" value="Macro_dom-like"/>
</dbReference>
<dbReference type="InterPro" id="IPR000819">
    <property type="entry name" value="Peptidase_M17_C"/>
</dbReference>
<dbReference type="InterPro" id="IPR023042">
    <property type="entry name" value="Peptidase_M17_leu_NH2_pept"/>
</dbReference>
<dbReference type="InterPro" id="IPR008283">
    <property type="entry name" value="Peptidase_M17_N"/>
</dbReference>
<dbReference type="NCBIfam" id="NF002072">
    <property type="entry name" value="PRK00913.1-1"/>
    <property type="match status" value="1"/>
</dbReference>
<dbReference type="NCBIfam" id="NF002074">
    <property type="entry name" value="PRK00913.1-4"/>
    <property type="match status" value="1"/>
</dbReference>
<dbReference type="PANTHER" id="PTHR11963:SF23">
    <property type="entry name" value="CYTOSOL AMINOPEPTIDASE"/>
    <property type="match status" value="1"/>
</dbReference>
<dbReference type="PANTHER" id="PTHR11963">
    <property type="entry name" value="LEUCINE AMINOPEPTIDASE-RELATED"/>
    <property type="match status" value="1"/>
</dbReference>
<dbReference type="Pfam" id="PF00883">
    <property type="entry name" value="Peptidase_M17"/>
    <property type="match status" value="1"/>
</dbReference>
<dbReference type="Pfam" id="PF02789">
    <property type="entry name" value="Peptidase_M17_N"/>
    <property type="match status" value="1"/>
</dbReference>
<dbReference type="PRINTS" id="PR00481">
    <property type="entry name" value="LAMNOPPTDASE"/>
</dbReference>
<dbReference type="SUPFAM" id="SSF52949">
    <property type="entry name" value="Macro domain-like"/>
    <property type="match status" value="1"/>
</dbReference>
<dbReference type="SUPFAM" id="SSF53187">
    <property type="entry name" value="Zn-dependent exopeptidases"/>
    <property type="match status" value="1"/>
</dbReference>
<dbReference type="PROSITE" id="PS00631">
    <property type="entry name" value="CYTOSOL_AP"/>
    <property type="match status" value="1"/>
</dbReference>
<proteinExistence type="inferred from homology"/>
<comment type="function">
    <text evidence="1">Presumably involved in the processing and regular turnover of intracellular proteins. Catalyzes the removal of unsubstituted N-terminal amino acids from various peptides.</text>
</comment>
<comment type="catalytic activity">
    <reaction evidence="1">
        <text>Release of an N-terminal amino acid, Xaa-|-Yaa-, in which Xaa is preferably Leu, but may be other amino acids including Pro although not Arg or Lys, and Yaa may be Pro. Amino acid amides and methyl esters are also readily hydrolyzed, but rates on arylamides are exceedingly low.</text>
        <dbReference type="EC" id="3.4.11.1"/>
    </reaction>
</comment>
<comment type="catalytic activity">
    <reaction evidence="1">
        <text>Release of an N-terminal amino acid, preferentially leucine, but not glutamic or aspartic acids.</text>
        <dbReference type="EC" id="3.4.11.10"/>
    </reaction>
</comment>
<comment type="cofactor">
    <cofactor evidence="1">
        <name>Mn(2+)</name>
        <dbReference type="ChEBI" id="CHEBI:29035"/>
    </cofactor>
    <text evidence="1">Binds 2 manganese ions per subunit.</text>
</comment>
<comment type="subcellular location">
    <subcellularLocation>
        <location evidence="1">Cytoplasm</location>
    </subcellularLocation>
</comment>
<comment type="similarity">
    <text evidence="1">Belongs to the peptidase M17 family.</text>
</comment>